<proteinExistence type="inferred from homology"/>
<dbReference type="EC" id="1.10.3.9" evidence="1"/>
<dbReference type="EMBL" id="X62800">
    <property type="protein sequence ID" value="CAA44621.1"/>
    <property type="molecule type" value="Genomic_DNA"/>
</dbReference>
<dbReference type="PIR" id="S14137">
    <property type="entry name" value="S14137"/>
</dbReference>
<dbReference type="SMR" id="P35860"/>
<dbReference type="GO" id="GO:0009535">
    <property type="term" value="C:chloroplast thylakoid membrane"/>
    <property type="evidence" value="ECO:0007669"/>
    <property type="project" value="UniProtKB-SubCell"/>
</dbReference>
<dbReference type="GO" id="GO:0009523">
    <property type="term" value="C:photosystem II"/>
    <property type="evidence" value="ECO:0007669"/>
    <property type="project" value="UniProtKB-KW"/>
</dbReference>
<dbReference type="GO" id="GO:0016168">
    <property type="term" value="F:chlorophyll binding"/>
    <property type="evidence" value="ECO:0007669"/>
    <property type="project" value="UniProtKB-UniRule"/>
</dbReference>
<dbReference type="GO" id="GO:0045156">
    <property type="term" value="F:electron transporter, transferring electrons within the cyclic electron transport pathway of photosynthesis activity"/>
    <property type="evidence" value="ECO:0007669"/>
    <property type="project" value="InterPro"/>
</dbReference>
<dbReference type="GO" id="GO:0005506">
    <property type="term" value="F:iron ion binding"/>
    <property type="evidence" value="ECO:0007669"/>
    <property type="project" value="UniProtKB-UniRule"/>
</dbReference>
<dbReference type="GO" id="GO:0016682">
    <property type="term" value="F:oxidoreductase activity, acting on diphenols and related substances as donors, oxygen as acceptor"/>
    <property type="evidence" value="ECO:0007669"/>
    <property type="project" value="UniProtKB-UniRule"/>
</dbReference>
<dbReference type="GO" id="GO:0010242">
    <property type="term" value="F:oxygen evolving activity"/>
    <property type="evidence" value="ECO:0007669"/>
    <property type="project" value="UniProtKB-EC"/>
</dbReference>
<dbReference type="GO" id="GO:0009772">
    <property type="term" value="P:photosynthetic electron transport in photosystem II"/>
    <property type="evidence" value="ECO:0007669"/>
    <property type="project" value="InterPro"/>
</dbReference>
<dbReference type="GO" id="GO:0009635">
    <property type="term" value="P:response to herbicide"/>
    <property type="evidence" value="ECO:0007669"/>
    <property type="project" value="UniProtKB-KW"/>
</dbReference>
<dbReference type="CDD" id="cd09289">
    <property type="entry name" value="Photosystem-II_D1"/>
    <property type="match status" value="1"/>
</dbReference>
<dbReference type="FunFam" id="1.20.85.10:FF:000002">
    <property type="entry name" value="Photosystem II protein D1"/>
    <property type="match status" value="1"/>
</dbReference>
<dbReference type="Gene3D" id="1.20.85.10">
    <property type="entry name" value="Photosystem II protein D1-like"/>
    <property type="match status" value="1"/>
</dbReference>
<dbReference type="HAMAP" id="MF_01379">
    <property type="entry name" value="PSII_PsbA_D1"/>
    <property type="match status" value="1"/>
</dbReference>
<dbReference type="InterPro" id="IPR055266">
    <property type="entry name" value="D1/D2"/>
</dbReference>
<dbReference type="InterPro" id="IPR036854">
    <property type="entry name" value="Photo_II_D1/D2_sf"/>
</dbReference>
<dbReference type="InterPro" id="IPR000484">
    <property type="entry name" value="Photo_RC_L/M"/>
</dbReference>
<dbReference type="InterPro" id="IPR055265">
    <property type="entry name" value="Photo_RC_L/M_CS"/>
</dbReference>
<dbReference type="InterPro" id="IPR005867">
    <property type="entry name" value="PSII_D1"/>
</dbReference>
<dbReference type="NCBIfam" id="TIGR01151">
    <property type="entry name" value="psbA"/>
    <property type="match status" value="1"/>
</dbReference>
<dbReference type="PANTHER" id="PTHR33149:SF12">
    <property type="entry name" value="PHOTOSYSTEM II D2 PROTEIN"/>
    <property type="match status" value="1"/>
</dbReference>
<dbReference type="PANTHER" id="PTHR33149">
    <property type="entry name" value="PHOTOSYSTEM II PROTEIN D1"/>
    <property type="match status" value="1"/>
</dbReference>
<dbReference type="Pfam" id="PF00124">
    <property type="entry name" value="Photo_RC"/>
    <property type="match status" value="1"/>
</dbReference>
<dbReference type="PRINTS" id="PR00256">
    <property type="entry name" value="REACTNCENTRE"/>
</dbReference>
<dbReference type="SUPFAM" id="SSF81483">
    <property type="entry name" value="Bacterial photosystem II reaction centre, L and M subunits"/>
    <property type="match status" value="1"/>
</dbReference>
<dbReference type="PROSITE" id="PS00244">
    <property type="entry name" value="REACTION_CENTER"/>
    <property type="match status" value="1"/>
</dbReference>
<sequence>MTAILERRESASLWARFCEWITSTENRLYIGWFGVLMIPTLLTATSVFIIAFIAAPPVDIDGIREPVSGYLLYGNNIISGAVVPTSNAIGLHFYPIWEAASLDEWLYNGGPYQLIVCHFFLGICCYMGREWELSFRLGMRPWIAVAYSAPVAAATAVFIIYPIGQGSFSDGMPLGISGTFNFMIVFQAEHNILMHPFHMLGVAGVFGGSLFSAMHGSLVTSSLIRETTENESRNAGYKFGQEEETYNIVAAHGYFGRLIFQYASFNNSRSLHFFLAAWPVVGIWFTALGISTMAFNLNGFNFNQSVVDSQGRVINTWADIINRANLGMEVMHERNAHNFPLDLASVEAPSIA</sequence>
<comment type="function">
    <text evidence="1">Photosystem II (PSII) is a light-driven water:plastoquinone oxidoreductase that uses light energy to abstract electrons from H(2)O, generating O(2) and a proton gradient subsequently used for ATP formation. It consists of a core antenna complex that captures photons, and an electron transfer chain that converts photonic excitation into a charge separation. The D1/D2 (PsbA/PsbD) reaction center heterodimer binds P680, the primary electron donor of PSII as well as several subsequent electron acceptors.</text>
</comment>
<comment type="catalytic activity">
    <reaction evidence="1">
        <text>2 a plastoquinone + 4 hnu + 2 H2O = 2 a plastoquinol + O2</text>
        <dbReference type="Rhea" id="RHEA:36359"/>
        <dbReference type="Rhea" id="RHEA-COMP:9561"/>
        <dbReference type="Rhea" id="RHEA-COMP:9562"/>
        <dbReference type="ChEBI" id="CHEBI:15377"/>
        <dbReference type="ChEBI" id="CHEBI:15379"/>
        <dbReference type="ChEBI" id="CHEBI:17757"/>
        <dbReference type="ChEBI" id="CHEBI:30212"/>
        <dbReference type="ChEBI" id="CHEBI:62192"/>
        <dbReference type="EC" id="1.10.3.9"/>
    </reaction>
</comment>
<comment type="cofactor">
    <text evidence="1">The D1/D2 heterodimer binds P680, chlorophylls that are the primary electron donor of PSII, and subsequent electron acceptors. It shares a non-heme iron and each subunit binds pheophytin, quinone, additional chlorophylls, carotenoids and lipids. D1 provides most of the ligands for the Mn4-Ca-O5 cluster of the oxygen-evolving complex (OEC). There is also a Cl(-1) ion associated with D1 and D2, which is required for oxygen evolution. The PSII complex binds additional chlorophylls, carotenoids and specific lipids.</text>
</comment>
<comment type="subunit">
    <text evidence="1">PSII is composed of 1 copy each of membrane proteins PsbA, PsbB, PsbC, PsbD, PsbE, PsbF, PsbH, PsbI, PsbJ, PsbK, PsbL, PsbM, PsbT, PsbX, PsbY, PsbZ, Psb30/Ycf12, at least 3 peripheral proteins of the oxygen-evolving complex and a large number of cofactors. It forms dimeric complexes.</text>
</comment>
<comment type="subcellular location">
    <subcellularLocation>
        <location evidence="1">Plastid</location>
        <location evidence="1">Chloroplast thylakoid membrane</location>
        <topology evidence="1">Multi-pass membrane protein</topology>
    </subcellularLocation>
</comment>
<comment type="PTM">
    <text evidence="1">Tyr-161 forms a radical intermediate that is referred to as redox-active TyrZ, YZ or Y-Z.</text>
</comment>
<comment type="PTM">
    <text evidence="1">C-terminally processed by CTPA; processing is essential to allow assembly of the oxygen-evolving complex and thus photosynthetic growth.</text>
</comment>
<comment type="miscellaneous">
    <text evidence="1">2 of the reaction center chlorophylls (ChlD1 and ChlD2) are entirely coordinated by water.</text>
</comment>
<comment type="miscellaneous">
    <text evidence="1">Herbicides such as atrazine, BNT, diuron or ioxynil bind in the Q(B) binding site and block subsequent electron transfer.</text>
</comment>
<comment type="similarity">
    <text evidence="1">Belongs to the reaction center PufL/M/PsbA/D family.</text>
</comment>
<organism>
    <name type="scientific">Chlorella ellipsoidea</name>
    <dbReference type="NCBI Taxonomy" id="3072"/>
    <lineage>
        <taxon>Eukaryota</taxon>
        <taxon>Viridiplantae</taxon>
        <taxon>Chlorophyta</taxon>
        <taxon>core chlorophytes</taxon>
        <taxon>Trebouxiophyceae</taxon>
        <taxon>Chlorellales</taxon>
        <taxon>Chlorellaceae</taxon>
        <taxon>Pseudochlorella</taxon>
    </lineage>
</organism>
<geneLocation type="chloroplast"/>
<accession>P35860</accession>
<gene>
    <name evidence="1" type="primary">psbA</name>
</gene>
<reference key="1">
    <citation type="journal article" date="1991" name="Curr. Genet.">
        <title>Repetitive sequence-mediated rearrangements in Chlorella ellipsoidea chloroplast DNA: completion of nucleotide sequence of the large inverted repeat.</title>
        <authorList>
            <person name="Yamada T."/>
        </authorList>
    </citation>
    <scope>NUCLEOTIDE SEQUENCE [GENOMIC DNA]</scope>
    <source>
        <strain>IAM C-87</strain>
    </source>
</reference>
<evidence type="ECO:0000255" key="1">
    <source>
        <dbReference type="HAMAP-Rule" id="MF_01379"/>
    </source>
</evidence>
<name>PSBA_CHLEL</name>
<protein>
    <recommendedName>
        <fullName evidence="1">Photosystem II protein D1</fullName>
        <shortName evidence="1">PSII D1 protein</shortName>
        <ecNumber evidence="1">1.10.3.9</ecNumber>
    </recommendedName>
    <alternativeName>
        <fullName evidence="1">Photosystem II Q(B) protein</fullName>
    </alternativeName>
</protein>
<feature type="initiator methionine" description="Removed" evidence="1">
    <location>
        <position position="1"/>
    </location>
</feature>
<feature type="chain" id="PRO_0000090429" description="Photosystem II protein D1" evidence="1">
    <location>
        <begin position="2"/>
        <end position="344"/>
    </location>
</feature>
<feature type="propeptide" id="PRO_0000316444" evidence="1">
    <location>
        <begin position="345"/>
        <end position="352"/>
    </location>
</feature>
<feature type="transmembrane region" description="Helical" evidence="1">
    <location>
        <begin position="29"/>
        <end position="46"/>
    </location>
</feature>
<feature type="transmembrane region" description="Helical" evidence="1">
    <location>
        <begin position="118"/>
        <end position="133"/>
    </location>
</feature>
<feature type="transmembrane region" description="Helical" evidence="1">
    <location>
        <begin position="142"/>
        <end position="156"/>
    </location>
</feature>
<feature type="transmembrane region" description="Helical" evidence="1">
    <location>
        <begin position="197"/>
        <end position="218"/>
    </location>
</feature>
<feature type="transmembrane region" description="Helical" evidence="1">
    <location>
        <begin position="274"/>
        <end position="288"/>
    </location>
</feature>
<feature type="binding site" description="axial binding residue" evidence="1">
    <location>
        <position position="118"/>
    </location>
    <ligand>
        <name>chlorophyll a</name>
        <dbReference type="ChEBI" id="CHEBI:58416"/>
        <label>ChlzD1</label>
    </ligand>
    <ligandPart>
        <name>Mg</name>
        <dbReference type="ChEBI" id="CHEBI:25107"/>
    </ligandPart>
</feature>
<feature type="binding site" evidence="1">
    <location>
        <position position="126"/>
    </location>
    <ligand>
        <name>pheophytin a</name>
        <dbReference type="ChEBI" id="CHEBI:136840"/>
        <label>D1</label>
    </ligand>
</feature>
<feature type="binding site" evidence="1">
    <location>
        <position position="170"/>
    </location>
    <ligand>
        <name>[CaMn4O5] cluster</name>
        <dbReference type="ChEBI" id="CHEBI:189552"/>
    </ligand>
</feature>
<feature type="binding site" evidence="1">
    <location>
        <position position="189"/>
    </location>
    <ligand>
        <name>[CaMn4O5] cluster</name>
        <dbReference type="ChEBI" id="CHEBI:189552"/>
    </ligand>
</feature>
<feature type="binding site" description="axial binding residue" evidence="1">
    <location>
        <position position="198"/>
    </location>
    <ligand>
        <name>chlorophyll a</name>
        <dbReference type="ChEBI" id="CHEBI:58416"/>
        <label>PD1</label>
    </ligand>
    <ligandPart>
        <name>Mg</name>
        <dbReference type="ChEBI" id="CHEBI:25107"/>
    </ligandPart>
</feature>
<feature type="binding site" evidence="1">
    <location>
        <position position="215"/>
    </location>
    <ligand>
        <name>a quinone</name>
        <dbReference type="ChEBI" id="CHEBI:132124"/>
        <label>B</label>
    </ligand>
</feature>
<feature type="binding site" evidence="1">
    <location>
        <position position="215"/>
    </location>
    <ligand>
        <name>Fe cation</name>
        <dbReference type="ChEBI" id="CHEBI:24875"/>
        <note>ligand shared with heterodimeric partner</note>
    </ligand>
</feature>
<feature type="binding site" evidence="1">
    <location>
        <begin position="264"/>
        <end position="265"/>
    </location>
    <ligand>
        <name>a quinone</name>
        <dbReference type="ChEBI" id="CHEBI:132124"/>
        <label>B</label>
    </ligand>
</feature>
<feature type="binding site" evidence="1">
    <location>
        <position position="272"/>
    </location>
    <ligand>
        <name>Fe cation</name>
        <dbReference type="ChEBI" id="CHEBI:24875"/>
        <note>ligand shared with heterodimeric partner</note>
    </ligand>
</feature>
<feature type="binding site" evidence="1">
    <location>
        <position position="332"/>
    </location>
    <ligand>
        <name>[CaMn4O5] cluster</name>
        <dbReference type="ChEBI" id="CHEBI:189552"/>
    </ligand>
</feature>
<feature type="binding site" evidence="1">
    <location>
        <position position="333"/>
    </location>
    <ligand>
        <name>[CaMn4O5] cluster</name>
        <dbReference type="ChEBI" id="CHEBI:189552"/>
    </ligand>
</feature>
<feature type="binding site" evidence="1">
    <location>
        <position position="342"/>
    </location>
    <ligand>
        <name>[CaMn4O5] cluster</name>
        <dbReference type="ChEBI" id="CHEBI:189552"/>
    </ligand>
</feature>
<feature type="binding site" evidence="1">
    <location>
        <position position="344"/>
    </location>
    <ligand>
        <name>[CaMn4O5] cluster</name>
        <dbReference type="ChEBI" id="CHEBI:189552"/>
    </ligand>
</feature>
<feature type="site" description="Tyrosine radical intermediate" evidence="1">
    <location>
        <position position="161"/>
    </location>
</feature>
<feature type="site" description="Stabilizes free radical intermediate" evidence="1">
    <location>
        <position position="190"/>
    </location>
</feature>
<feature type="site" description="Cleavage; by CTPA" evidence="1">
    <location>
        <begin position="344"/>
        <end position="345"/>
    </location>
</feature>
<feature type="modified residue" description="N-acetylthreonine" evidence="1">
    <location>
        <position position="2"/>
    </location>
</feature>
<feature type="modified residue" description="Phosphothreonine" evidence="1">
    <location>
        <position position="2"/>
    </location>
</feature>
<keyword id="KW-0007">Acetylation</keyword>
<keyword id="KW-0106">Calcium</keyword>
<keyword id="KW-0148">Chlorophyll</keyword>
<keyword id="KW-0150">Chloroplast</keyword>
<keyword id="KW-0157">Chromophore</keyword>
<keyword id="KW-0249">Electron transport</keyword>
<keyword id="KW-0359">Herbicide resistance</keyword>
<keyword id="KW-0408">Iron</keyword>
<keyword id="KW-0460">Magnesium</keyword>
<keyword id="KW-0464">Manganese</keyword>
<keyword id="KW-0472">Membrane</keyword>
<keyword id="KW-0479">Metal-binding</keyword>
<keyword id="KW-0560">Oxidoreductase</keyword>
<keyword id="KW-0597">Phosphoprotein</keyword>
<keyword id="KW-0602">Photosynthesis</keyword>
<keyword id="KW-0604">Photosystem II</keyword>
<keyword id="KW-0934">Plastid</keyword>
<keyword id="KW-0793">Thylakoid</keyword>
<keyword id="KW-0812">Transmembrane</keyword>
<keyword id="KW-1133">Transmembrane helix</keyword>
<keyword id="KW-0813">Transport</keyword>